<protein>
    <recommendedName>
        <fullName evidence="9">Ent-copalyl diphosphate synthase AN1, chloroplastic</fullName>
        <shortName evidence="7">Ent-CPP synthase</shortName>
        <shortName evidence="7">Ent-CPS</shortName>
        <ecNumber evidence="5">5.5.1.13</ecNumber>
    </recommendedName>
    <alternativeName>
        <fullName evidence="8">Ent-kaurene synthase A</fullName>
    </alternativeName>
    <alternativeName>
        <fullName evidence="8">Protein ANTHER EAR 1</fullName>
    </alternativeName>
</protein>
<gene>
    <name evidence="8" type="primary">AN1</name>
    <name evidence="11" type="ORF">ZEAMMB73_Zm00001d032961</name>
</gene>
<evidence type="ECO:0000250" key="1">
    <source>
        <dbReference type="UniProtKB" id="C7BKP9"/>
    </source>
</evidence>
<evidence type="ECO:0000250" key="2">
    <source>
        <dbReference type="UniProtKB" id="Q38802"/>
    </source>
</evidence>
<evidence type="ECO:0000255" key="3"/>
<evidence type="ECO:0000256" key="4">
    <source>
        <dbReference type="SAM" id="MobiDB-lite"/>
    </source>
</evidence>
<evidence type="ECO:0000269" key="5">
    <source>
    </source>
</evidence>
<evidence type="ECO:0000269" key="6">
    <source>
    </source>
</evidence>
<evidence type="ECO:0000303" key="7">
    <source>
    </source>
</evidence>
<evidence type="ECO:0000303" key="8">
    <source>
    </source>
</evidence>
<evidence type="ECO:0000305" key="9"/>
<evidence type="ECO:0000305" key="10">
    <source>
    </source>
</evidence>
<evidence type="ECO:0000312" key="11">
    <source>
        <dbReference type="EMBL" id="ONM06422.1"/>
    </source>
</evidence>
<keyword id="KW-0150">Chloroplast</keyword>
<keyword id="KW-0413">Isomerase</keyword>
<keyword id="KW-0460">Magnesium</keyword>
<keyword id="KW-0479">Metal-binding</keyword>
<keyword id="KW-0934">Plastid</keyword>
<keyword id="KW-1185">Reference proteome</keyword>
<keyword id="KW-0809">Transit peptide</keyword>
<accession>Q41771</accession>
<accession>A0A1D6KV47</accession>
<sequence length="824" mass="95180">MPYPHPYPWQSSRRRRRRRGRDGAPRQPQARRVVERAAAGPGHATTTQQPDNVSSAKVFQTSRVETESEIAKWPGKPQDLEDEHQAEEAELQPLIDQVRAMLRSMNDGDTSASAYDTAWVAMVPKVGGDGGAQPQFPATVRWIVDHQLPDGSWGDSALFSAYDRMINTLACVVALTKWSLEPARCEAGLSFLHENMWRLAEEEAESMPIGFEIAFPSLIQTARDLGVVDFPYGHPALQSIYANREVKLKRIPRDMMHRVPTSILHSLEGMPDLDWPRLLNLQSCDGSFLFSPSATAYALMQTGDKKCFEYIDRIVKKFNGGVPNVYPVDLFEHIWVVDRLERLGISRYFQREIEQCMDYVNRHWTEDGICWARKSNVKDVDDTAMAFRLLRLHGYNVSPSVFKNFEKDGEFFCFVGQSTQAVTGMYNLNRASQISFQGEDVLHRARVFSYEFLRQREEQGMIRDKWIVAKDLPGEVQYTLDFPWYASLPRVEARTYLDQYGGKDDVWIGKTLYRMPLVNNDTYLELAIRDFNHCQALHQLECNGLQTWYKDNCLDAFGVEPQDVLRSYFLAAACIFEPSRAAERLAWARTSMIANAISTHLRDISEDKKRLECFVHCLYEENDVSWLKRNPNDVILERALRRLINLLAQEALPIHEGQRFIHSLLSLAWTEWMLQKANKEENKYHKCSGIEPQYMVHDRQTYLLLVQVIEICAGRIGEAVSMINNKDNDWFIQLTCATCDSLNHRMLLSQDTMKNEARINWIEKEIELNMQELAQSLLLRCDEKTSNKKTKKTLWDVLRSLYYATHSPQHMIDRHVSRVIFEPV</sequence>
<organism>
    <name type="scientific">Zea mays</name>
    <name type="common">Maize</name>
    <dbReference type="NCBI Taxonomy" id="4577"/>
    <lineage>
        <taxon>Eukaryota</taxon>
        <taxon>Viridiplantae</taxon>
        <taxon>Streptophyta</taxon>
        <taxon>Embryophyta</taxon>
        <taxon>Tracheophyta</taxon>
        <taxon>Spermatophyta</taxon>
        <taxon>Magnoliopsida</taxon>
        <taxon>Liliopsida</taxon>
        <taxon>Poales</taxon>
        <taxon>Poaceae</taxon>
        <taxon>PACMAD clade</taxon>
        <taxon>Panicoideae</taxon>
        <taxon>Andropogonodae</taxon>
        <taxon>Andropogoneae</taxon>
        <taxon>Tripsacinae</taxon>
        <taxon>Zea</taxon>
    </lineage>
</organism>
<name>AN1_MAIZE</name>
<comment type="function">
    <text evidence="5 10">Involved in giberellin biosynthesis (Probable) (PubMed:16307364). Catalyzes the conversion of geranylgeranyl diphosphate to the gibberellin precursor ent-copalyl diphosphate (Probable) (PubMed:16307364).</text>
</comment>
<comment type="catalytic activity">
    <reaction evidence="5">
        <text>(2E,6E,10E)-geranylgeranyl diphosphate = ent-copalyl diphosphate</text>
        <dbReference type="Rhea" id="RHEA:14841"/>
        <dbReference type="ChEBI" id="CHEBI:58553"/>
        <dbReference type="ChEBI" id="CHEBI:58756"/>
        <dbReference type="EC" id="5.5.1.13"/>
    </reaction>
</comment>
<comment type="cofactor">
    <cofactor evidence="2">
        <name>Mg(2+)</name>
        <dbReference type="ChEBI" id="CHEBI:18420"/>
    </cofactor>
</comment>
<comment type="pathway">
    <text evidence="9">Plant hormone biosynthesis; gibberellin biosynthesis.</text>
</comment>
<comment type="subcellular location">
    <subcellularLocation>
        <location evidence="3">Plastid</location>
        <location evidence="3">Chloroplast</location>
    </subcellularLocation>
</comment>
<comment type="domain">
    <text evidence="9">The Asp-Xaa-Asp-Asp (DXDD) motif is important for the catalytic activity through binding to Mg(2+).</text>
</comment>
<comment type="disruption phenotype">
    <text evidence="6">Dwarf phenotype due to gibberellin-deficient mutant, displaying reduced internode lengths, foreshortened broad leaves, and unbranched tassel.</text>
</comment>
<comment type="similarity">
    <text evidence="9">Belongs to the terpene synthase family. Tpsc subfamily.</text>
</comment>
<dbReference type="EC" id="5.5.1.13" evidence="5"/>
<dbReference type="EMBL" id="L37750">
    <property type="protein sequence ID" value="AAA73960.1"/>
    <property type="molecule type" value="mRNA"/>
</dbReference>
<dbReference type="EMBL" id="CM007647">
    <property type="protein sequence ID" value="ONM06422.1"/>
    <property type="molecule type" value="Genomic_DNA"/>
</dbReference>
<dbReference type="PIR" id="T02959">
    <property type="entry name" value="T02959"/>
</dbReference>
<dbReference type="RefSeq" id="NP_001105329.2">
    <property type="nucleotide sequence ID" value="NM_001111859.2"/>
</dbReference>
<dbReference type="SMR" id="Q41771"/>
<dbReference type="FunCoup" id="Q41771">
    <property type="interactions" value="2570"/>
</dbReference>
<dbReference type="STRING" id="4577.Q41771"/>
<dbReference type="PaxDb" id="4577-GRMZM2G081554_P01"/>
<dbReference type="GeneID" id="542253"/>
<dbReference type="KEGG" id="zma:542253"/>
<dbReference type="eggNOG" id="ENOG502QQN6">
    <property type="taxonomic scope" value="Eukaryota"/>
</dbReference>
<dbReference type="InParanoid" id="Q41771"/>
<dbReference type="OrthoDB" id="2343925at2759"/>
<dbReference type="UniPathway" id="UPA00390"/>
<dbReference type="Proteomes" id="UP000007305">
    <property type="component" value="Unplaced"/>
</dbReference>
<dbReference type="ExpressionAtlas" id="Q41771">
    <property type="expression patterns" value="baseline and differential"/>
</dbReference>
<dbReference type="GO" id="GO:0009507">
    <property type="term" value="C:chloroplast"/>
    <property type="evidence" value="ECO:0000318"/>
    <property type="project" value="GO_Central"/>
</dbReference>
<dbReference type="GO" id="GO:0009905">
    <property type="term" value="F:ent-copalyl diphosphate synthase activity"/>
    <property type="evidence" value="ECO:0007669"/>
    <property type="project" value="UniProtKB-EC"/>
</dbReference>
<dbReference type="GO" id="GO:0016853">
    <property type="term" value="F:isomerase activity"/>
    <property type="evidence" value="ECO:0000315"/>
    <property type="project" value="UniProtKB"/>
</dbReference>
<dbReference type="GO" id="GO:0000287">
    <property type="term" value="F:magnesium ion binding"/>
    <property type="evidence" value="ECO:0000318"/>
    <property type="project" value="GO_Central"/>
</dbReference>
<dbReference type="GO" id="GO:0010333">
    <property type="term" value="F:terpene synthase activity"/>
    <property type="evidence" value="ECO:0000314"/>
    <property type="project" value="UniProtKB"/>
</dbReference>
<dbReference type="GO" id="GO:0016102">
    <property type="term" value="P:diterpenoid biosynthetic process"/>
    <property type="evidence" value="ECO:0000314"/>
    <property type="project" value="UniProtKB"/>
</dbReference>
<dbReference type="GO" id="GO:0009686">
    <property type="term" value="P:gibberellin biosynthetic process"/>
    <property type="evidence" value="ECO:0000315"/>
    <property type="project" value="UniProtKB"/>
</dbReference>
<dbReference type="FunFam" id="1.10.600.10:FF:000024">
    <property type="entry name" value="Ent-copalyl diphosphate synthase"/>
    <property type="match status" value="1"/>
</dbReference>
<dbReference type="FunFam" id="1.50.10.160:FF:000001">
    <property type="entry name" value="Ent-copalyl diphosphate synthase"/>
    <property type="match status" value="1"/>
</dbReference>
<dbReference type="FunFam" id="1.50.10.130:FF:000002">
    <property type="entry name" value="Ent-copalyl diphosphate synthase, chloroplastic"/>
    <property type="match status" value="1"/>
</dbReference>
<dbReference type="Gene3D" id="1.50.10.160">
    <property type="match status" value="1"/>
</dbReference>
<dbReference type="Gene3D" id="1.10.600.10">
    <property type="entry name" value="Farnesyl Diphosphate Synthase"/>
    <property type="match status" value="1"/>
</dbReference>
<dbReference type="Gene3D" id="1.50.10.130">
    <property type="entry name" value="Terpene synthase, N-terminal domain"/>
    <property type="match status" value="1"/>
</dbReference>
<dbReference type="InterPro" id="IPR008949">
    <property type="entry name" value="Isoprenoid_synthase_dom_sf"/>
</dbReference>
<dbReference type="InterPro" id="IPR001906">
    <property type="entry name" value="Terpene_synth_N"/>
</dbReference>
<dbReference type="InterPro" id="IPR036965">
    <property type="entry name" value="Terpene_synth_N_sf"/>
</dbReference>
<dbReference type="InterPro" id="IPR050148">
    <property type="entry name" value="Terpene_synthase-like"/>
</dbReference>
<dbReference type="InterPro" id="IPR008930">
    <property type="entry name" value="Terpenoid_cyclase/PrenylTrfase"/>
</dbReference>
<dbReference type="PANTHER" id="PTHR31739:SF45">
    <property type="entry name" value="ENT-COPALYL DIPHOSPHATE SYNTHASE AN1, CHLOROPLASTIC"/>
    <property type="match status" value="1"/>
</dbReference>
<dbReference type="PANTHER" id="PTHR31739">
    <property type="entry name" value="ENT-COPALYL DIPHOSPHATE SYNTHASE, CHLOROPLASTIC"/>
    <property type="match status" value="1"/>
</dbReference>
<dbReference type="Pfam" id="PF01397">
    <property type="entry name" value="Terpene_synth"/>
    <property type="match status" value="1"/>
</dbReference>
<dbReference type="SFLD" id="SFLDG01014">
    <property type="entry name" value="Terpene_Cyclase_Like_1_N-term"/>
    <property type="match status" value="1"/>
</dbReference>
<dbReference type="SFLD" id="SFLDG01605">
    <property type="entry name" value="Terpene_Cyclase_Like_1_N-term"/>
    <property type="match status" value="1"/>
</dbReference>
<dbReference type="SUPFAM" id="SSF48239">
    <property type="entry name" value="Terpenoid cyclases/Protein prenyltransferases"/>
    <property type="match status" value="2"/>
</dbReference>
<dbReference type="SUPFAM" id="SSF48576">
    <property type="entry name" value="Terpenoid synthases"/>
    <property type="match status" value="1"/>
</dbReference>
<proteinExistence type="evidence at protein level"/>
<reference key="1">
    <citation type="journal article" date="1995" name="Plant Cell">
        <title>Cloning and characterization of the maize An1 gene.</title>
        <authorList>
            <person name="Bensen R.J."/>
            <person name="Johal G.S."/>
            <person name="Crane V.C."/>
            <person name="Tossberg J.T."/>
            <person name="Schnable P.S."/>
            <person name="Meeley R.B."/>
            <person name="Briggs S.P."/>
        </authorList>
    </citation>
    <scope>NUCLEOTIDE SEQUENCE [MRNA]</scope>
    <scope>FUNCTION</scope>
    <scope>DISRUPTION PHENOTYPE</scope>
</reference>
<reference key="2">
    <citation type="journal article" date="2009" name="Science">
        <title>The B73 maize genome: complexity, diversity, and dynamics.</title>
        <authorList>
            <person name="Schnable P.S."/>
            <person name="Ware D."/>
            <person name="Fulton R.S."/>
            <person name="Stein J.C."/>
            <person name="Wei F."/>
            <person name="Pasternak S."/>
            <person name="Liang C."/>
            <person name="Zhang J."/>
            <person name="Fulton L."/>
            <person name="Graves T.A."/>
            <person name="Minx P."/>
            <person name="Reily A.D."/>
            <person name="Courtney L."/>
            <person name="Kruchowski S.S."/>
            <person name="Tomlinson C."/>
            <person name="Strong C."/>
            <person name="Delehaunty K."/>
            <person name="Fronick C."/>
            <person name="Courtney B."/>
            <person name="Rock S.M."/>
            <person name="Belter E."/>
            <person name="Du F."/>
            <person name="Kim K."/>
            <person name="Abbott R.M."/>
            <person name="Cotton M."/>
            <person name="Levy A."/>
            <person name="Marchetto P."/>
            <person name="Ochoa K."/>
            <person name="Jackson S.M."/>
            <person name="Gillam B."/>
            <person name="Chen W."/>
            <person name="Yan L."/>
            <person name="Higginbotham J."/>
            <person name="Cardenas M."/>
            <person name="Waligorski J."/>
            <person name="Applebaum E."/>
            <person name="Phelps L."/>
            <person name="Falcone J."/>
            <person name="Kanchi K."/>
            <person name="Thane T."/>
            <person name="Scimone A."/>
            <person name="Thane N."/>
            <person name="Henke J."/>
            <person name="Wang T."/>
            <person name="Ruppert J."/>
            <person name="Shah N."/>
            <person name="Rotter K."/>
            <person name="Hodges J."/>
            <person name="Ingenthron E."/>
            <person name="Cordes M."/>
            <person name="Kohlberg S."/>
            <person name="Sgro J."/>
            <person name="Delgado B."/>
            <person name="Mead K."/>
            <person name="Chinwalla A."/>
            <person name="Leonard S."/>
            <person name="Crouse K."/>
            <person name="Collura K."/>
            <person name="Kudrna D."/>
            <person name="Currie J."/>
            <person name="He R."/>
            <person name="Angelova A."/>
            <person name="Rajasekar S."/>
            <person name="Mueller T."/>
            <person name="Lomeli R."/>
            <person name="Scara G."/>
            <person name="Ko A."/>
            <person name="Delaney K."/>
            <person name="Wissotski M."/>
            <person name="Lopez G."/>
            <person name="Campos D."/>
            <person name="Braidotti M."/>
            <person name="Ashley E."/>
            <person name="Golser W."/>
            <person name="Kim H."/>
            <person name="Lee S."/>
            <person name="Lin J."/>
            <person name="Dujmic Z."/>
            <person name="Kim W."/>
            <person name="Talag J."/>
            <person name="Zuccolo A."/>
            <person name="Fan C."/>
            <person name="Sebastian A."/>
            <person name="Kramer M."/>
            <person name="Spiegel L."/>
            <person name="Nascimento L."/>
            <person name="Zutavern T."/>
            <person name="Miller B."/>
            <person name="Ambroise C."/>
            <person name="Muller S."/>
            <person name="Spooner W."/>
            <person name="Narechania A."/>
            <person name="Ren L."/>
            <person name="Wei S."/>
            <person name="Kumari S."/>
            <person name="Faga B."/>
            <person name="Levy M.J."/>
            <person name="McMahan L."/>
            <person name="Van Buren P."/>
            <person name="Vaughn M.W."/>
            <person name="Ying K."/>
            <person name="Yeh C.-T."/>
            <person name="Emrich S.J."/>
            <person name="Jia Y."/>
            <person name="Kalyanaraman A."/>
            <person name="Hsia A.-P."/>
            <person name="Barbazuk W.B."/>
            <person name="Baucom R.S."/>
            <person name="Brutnell T.P."/>
            <person name="Carpita N.C."/>
            <person name="Chaparro C."/>
            <person name="Chia J.-M."/>
            <person name="Deragon J.-M."/>
            <person name="Estill J.C."/>
            <person name="Fu Y."/>
            <person name="Jeddeloh J.A."/>
            <person name="Han Y."/>
            <person name="Lee H."/>
            <person name="Li P."/>
            <person name="Lisch D.R."/>
            <person name="Liu S."/>
            <person name="Liu Z."/>
            <person name="Nagel D.H."/>
            <person name="McCann M.C."/>
            <person name="SanMiguel P."/>
            <person name="Myers A.M."/>
            <person name="Nettleton D."/>
            <person name="Nguyen J."/>
            <person name="Penning B.W."/>
            <person name="Ponnala L."/>
            <person name="Schneider K.L."/>
            <person name="Schwartz D.C."/>
            <person name="Sharma A."/>
            <person name="Soderlund C."/>
            <person name="Springer N.M."/>
            <person name="Sun Q."/>
            <person name="Wang H."/>
            <person name="Waterman M."/>
            <person name="Westerman R."/>
            <person name="Wolfgruber T.K."/>
            <person name="Yang L."/>
            <person name="Yu Y."/>
            <person name="Zhang L."/>
            <person name="Zhou S."/>
            <person name="Zhu Q."/>
            <person name="Bennetzen J.L."/>
            <person name="Dawe R.K."/>
            <person name="Jiang J."/>
            <person name="Jiang N."/>
            <person name="Presting G.G."/>
            <person name="Wessler S.R."/>
            <person name="Aluru S."/>
            <person name="Martienssen R.A."/>
            <person name="Clifton S.W."/>
            <person name="McCombie W.R."/>
            <person name="Wing R.A."/>
            <person name="Wilson R.K."/>
        </authorList>
    </citation>
    <scope>NUCLEOTIDE SEQUENCE [LARGE SCALE GENOMIC DNA]</scope>
    <source>
        <strain>cv. B73</strain>
    </source>
</reference>
<reference key="3">
    <citation type="journal article" date="2005" name="Plant Mol. Biol.">
        <title>The maize An2 gene is induced by Fusarium attack and encodes an ent-copalyl diphosphate synthase.</title>
        <authorList>
            <person name="Harris L.J."/>
            <person name="Saparno A."/>
            <person name="Johnston A."/>
            <person name="Prisic S."/>
            <person name="Xu M."/>
            <person name="Allard S."/>
            <person name="Kathiresan A."/>
            <person name="Ouellet T."/>
            <person name="Peters R.J."/>
        </authorList>
    </citation>
    <scope>FUNCTION</scope>
    <scope>CATALYTIC ACTIVITY</scope>
</reference>
<feature type="transit peptide" description="Chloroplast" evidence="3">
    <location>
        <begin position="1"/>
        <end position="63"/>
    </location>
</feature>
<feature type="chain" id="PRO_0000447769" description="Ent-copalyl diphosphate synthase AN1, chloroplastic">
    <location>
        <begin position="64"/>
        <end position="824"/>
    </location>
</feature>
<feature type="region of interest" description="Disordered" evidence="4">
    <location>
        <begin position="1"/>
        <end position="87"/>
    </location>
</feature>
<feature type="short sequence motif" description="DXDD motif" evidence="9">
    <location>
        <begin position="379"/>
        <end position="382"/>
    </location>
</feature>
<feature type="compositionally biased region" description="Polar residues" evidence="4">
    <location>
        <begin position="44"/>
        <end position="63"/>
    </location>
</feature>
<feature type="binding site" evidence="2">
    <location>
        <position position="247"/>
    </location>
    <ligand>
        <name>substrate</name>
    </ligand>
</feature>
<feature type="binding site" evidence="1">
    <location>
        <position position="379"/>
    </location>
    <ligand>
        <name>Mg(2+)</name>
        <dbReference type="ChEBI" id="CHEBI:18420"/>
    </ligand>
</feature>
<feature type="binding site" evidence="1">
    <location>
        <position position="381"/>
    </location>
    <ligand>
        <name>Mg(2+)</name>
        <dbReference type="ChEBI" id="CHEBI:18420"/>
    </ligand>
</feature>
<feature type="binding site" evidence="2">
    <location>
        <position position="465"/>
    </location>
    <ligand>
        <name>substrate</name>
    </ligand>
</feature>